<accession>B1LHL4</accession>
<feature type="chain" id="PRO_1000186752" description="Fe/S biogenesis protein NfuA">
    <location>
        <begin position="1"/>
        <end position="191"/>
    </location>
</feature>
<feature type="binding site" evidence="1">
    <location>
        <position position="149"/>
    </location>
    <ligand>
        <name>[4Fe-4S] cluster</name>
        <dbReference type="ChEBI" id="CHEBI:49883"/>
    </ligand>
</feature>
<feature type="binding site" evidence="1">
    <location>
        <position position="152"/>
    </location>
    <ligand>
        <name>[4Fe-4S] cluster</name>
        <dbReference type="ChEBI" id="CHEBI:49883"/>
    </ligand>
</feature>
<proteinExistence type="inferred from homology"/>
<name>NFUA_ECOSM</name>
<keyword id="KW-0004">4Fe-4S</keyword>
<keyword id="KW-0408">Iron</keyword>
<keyword id="KW-0411">Iron-sulfur</keyword>
<keyword id="KW-0479">Metal-binding</keyword>
<dbReference type="EMBL" id="CP000970">
    <property type="protein sequence ID" value="ACB17100.1"/>
    <property type="molecule type" value="Genomic_DNA"/>
</dbReference>
<dbReference type="RefSeq" id="WP_000619389.1">
    <property type="nucleotide sequence ID" value="NC_010498.1"/>
</dbReference>
<dbReference type="SMR" id="B1LHL4"/>
<dbReference type="GeneID" id="93778582"/>
<dbReference type="KEGG" id="ecm:EcSMS35_3695"/>
<dbReference type="HOGENOM" id="CLU_094569_0_0_6"/>
<dbReference type="Proteomes" id="UP000007011">
    <property type="component" value="Chromosome"/>
</dbReference>
<dbReference type="GO" id="GO:0051539">
    <property type="term" value="F:4 iron, 4 sulfur cluster binding"/>
    <property type="evidence" value="ECO:0007669"/>
    <property type="project" value="UniProtKB-UniRule"/>
</dbReference>
<dbReference type="GO" id="GO:0005506">
    <property type="term" value="F:iron ion binding"/>
    <property type="evidence" value="ECO:0007669"/>
    <property type="project" value="InterPro"/>
</dbReference>
<dbReference type="GO" id="GO:0016226">
    <property type="term" value="P:iron-sulfur cluster assembly"/>
    <property type="evidence" value="ECO:0007669"/>
    <property type="project" value="UniProtKB-UniRule"/>
</dbReference>
<dbReference type="GO" id="GO:0051604">
    <property type="term" value="P:protein maturation"/>
    <property type="evidence" value="ECO:0007669"/>
    <property type="project" value="UniProtKB-UniRule"/>
</dbReference>
<dbReference type="FunFam" id="2.60.300.12:FF:000004">
    <property type="entry name" value="Fe/S biogenesis protein NfuA"/>
    <property type="match status" value="1"/>
</dbReference>
<dbReference type="FunFam" id="3.30.300.130:FF:000002">
    <property type="entry name" value="Fe/S biogenesis protein NfuA"/>
    <property type="match status" value="1"/>
</dbReference>
<dbReference type="Gene3D" id="3.30.300.130">
    <property type="entry name" value="Fe-S cluster assembly (FSCA)"/>
    <property type="match status" value="1"/>
</dbReference>
<dbReference type="Gene3D" id="2.60.300.12">
    <property type="entry name" value="HesB-like domain"/>
    <property type="match status" value="1"/>
</dbReference>
<dbReference type="HAMAP" id="MF_01637">
    <property type="entry name" value="Fe_S_biogen_NfuA"/>
    <property type="match status" value="1"/>
</dbReference>
<dbReference type="InterPro" id="IPR017726">
    <property type="entry name" value="Fe/S_biogenesis_protein_NfuA"/>
</dbReference>
<dbReference type="InterPro" id="IPR000361">
    <property type="entry name" value="FeS_biogenesis"/>
</dbReference>
<dbReference type="InterPro" id="IPR034904">
    <property type="entry name" value="FSCA_dom_sf"/>
</dbReference>
<dbReference type="InterPro" id="IPR035903">
    <property type="entry name" value="HesB-like_dom_sf"/>
</dbReference>
<dbReference type="InterPro" id="IPR001075">
    <property type="entry name" value="NIF_FeS_clus_asmbl_NifU_C"/>
</dbReference>
<dbReference type="NCBIfam" id="NF008392">
    <property type="entry name" value="PRK11190.1"/>
    <property type="match status" value="1"/>
</dbReference>
<dbReference type="NCBIfam" id="TIGR03341">
    <property type="entry name" value="YhgI_GntY"/>
    <property type="match status" value="1"/>
</dbReference>
<dbReference type="PANTHER" id="PTHR11178:SF51">
    <property type="entry name" value="FE_S BIOGENESIS PROTEIN NFUA"/>
    <property type="match status" value="1"/>
</dbReference>
<dbReference type="PANTHER" id="PTHR11178">
    <property type="entry name" value="IRON-SULFUR CLUSTER SCAFFOLD PROTEIN NFU-RELATED"/>
    <property type="match status" value="1"/>
</dbReference>
<dbReference type="Pfam" id="PF01521">
    <property type="entry name" value="Fe-S_biosyn"/>
    <property type="match status" value="1"/>
</dbReference>
<dbReference type="Pfam" id="PF01106">
    <property type="entry name" value="NifU"/>
    <property type="match status" value="1"/>
</dbReference>
<dbReference type="SUPFAM" id="SSF117916">
    <property type="entry name" value="Fe-S cluster assembly (FSCA) domain-like"/>
    <property type="match status" value="1"/>
</dbReference>
<dbReference type="SUPFAM" id="SSF89360">
    <property type="entry name" value="HesB-like domain"/>
    <property type="match status" value="1"/>
</dbReference>
<gene>
    <name evidence="1" type="primary">nfuA</name>
    <name type="ordered locus">EcSMS35_3695</name>
</gene>
<organism>
    <name type="scientific">Escherichia coli (strain SMS-3-5 / SECEC)</name>
    <dbReference type="NCBI Taxonomy" id="439855"/>
    <lineage>
        <taxon>Bacteria</taxon>
        <taxon>Pseudomonadati</taxon>
        <taxon>Pseudomonadota</taxon>
        <taxon>Gammaproteobacteria</taxon>
        <taxon>Enterobacterales</taxon>
        <taxon>Enterobacteriaceae</taxon>
        <taxon>Escherichia</taxon>
    </lineage>
</organism>
<protein>
    <recommendedName>
        <fullName evidence="1">Fe/S biogenesis protein NfuA</fullName>
    </recommendedName>
</protein>
<sequence>MIRISDAAQAHFAKLLANQEEGTQIRVFVINPGTPNAECGVSYCPPDAVEATDTALKFDLLTAYVDELSAPYLEDAEIDFVTDQLGSQLTLKAPNAKMRKVADDAPLMERVEYMLQSQINPQLAGHGGRVSLMEITEDGYAILQFGGGCNGCSMVDVTLKEGIEKQLLNEFPELKGVRDLTEHQRGEHSYY</sequence>
<comment type="function">
    <text evidence="1">Involved in iron-sulfur cluster biogenesis. Binds a 4Fe-4S cluster, can transfer this cluster to apoproteins, and thereby intervenes in the maturation of Fe/S proteins. Could also act as a scaffold/chaperone for damaged Fe/S proteins.</text>
</comment>
<comment type="cofactor">
    <cofactor evidence="1">
        <name>[4Fe-4S] cluster</name>
        <dbReference type="ChEBI" id="CHEBI:49883"/>
    </cofactor>
    <text evidence="1">Binds 1 [4Fe-4S] cluster per subunit. The cluster is presumably bound at the interface of two monomers.</text>
</comment>
<comment type="subunit">
    <text evidence="1">Homodimer.</text>
</comment>
<comment type="similarity">
    <text evidence="1">Belongs to the NfuA family.</text>
</comment>
<evidence type="ECO:0000255" key="1">
    <source>
        <dbReference type="HAMAP-Rule" id="MF_01637"/>
    </source>
</evidence>
<reference key="1">
    <citation type="journal article" date="2008" name="J. Bacteriol.">
        <title>Insights into the environmental resistance gene pool from the genome sequence of the multidrug-resistant environmental isolate Escherichia coli SMS-3-5.</title>
        <authorList>
            <person name="Fricke W.F."/>
            <person name="Wright M.S."/>
            <person name="Lindell A.H."/>
            <person name="Harkins D.M."/>
            <person name="Baker-Austin C."/>
            <person name="Ravel J."/>
            <person name="Stepanauskas R."/>
        </authorList>
    </citation>
    <scope>NUCLEOTIDE SEQUENCE [LARGE SCALE GENOMIC DNA]</scope>
    <source>
        <strain>SMS-3-5 / SECEC</strain>
    </source>
</reference>